<name>RIMP_CHRSD</name>
<evidence type="ECO:0000255" key="1">
    <source>
        <dbReference type="HAMAP-Rule" id="MF_01077"/>
    </source>
</evidence>
<proteinExistence type="inferred from homology"/>
<comment type="function">
    <text evidence="1">Required for maturation of 30S ribosomal subunits.</text>
</comment>
<comment type="subcellular location">
    <subcellularLocation>
        <location evidence="1">Cytoplasm</location>
    </subcellularLocation>
</comment>
<comment type="similarity">
    <text evidence="1">Belongs to the RimP family.</text>
</comment>
<reference key="1">
    <citation type="journal article" date="2011" name="Stand. Genomic Sci.">
        <title>Complete genome sequence of the halophilic and highly halotolerant Chromohalobacter salexigens type strain (1H11(T)).</title>
        <authorList>
            <person name="Copeland A."/>
            <person name="O'Connor K."/>
            <person name="Lucas S."/>
            <person name="Lapidus A."/>
            <person name="Berry K.W."/>
            <person name="Detter J.C."/>
            <person name="Del Rio T.G."/>
            <person name="Hammon N."/>
            <person name="Dalin E."/>
            <person name="Tice H."/>
            <person name="Pitluck S."/>
            <person name="Bruce D."/>
            <person name="Goodwin L."/>
            <person name="Han C."/>
            <person name="Tapia R."/>
            <person name="Saunders E."/>
            <person name="Schmutz J."/>
            <person name="Brettin T."/>
            <person name="Larimer F."/>
            <person name="Land M."/>
            <person name="Hauser L."/>
            <person name="Vargas C."/>
            <person name="Nieto J.J."/>
            <person name="Kyrpides N.C."/>
            <person name="Ivanova N."/>
            <person name="Goker M."/>
            <person name="Klenk H.P."/>
            <person name="Csonka L.N."/>
            <person name="Woyke T."/>
        </authorList>
    </citation>
    <scope>NUCLEOTIDE SEQUENCE [LARGE SCALE GENOMIC DNA]</scope>
    <source>
        <strain>ATCC BAA-138 / DSM 3043 / CIP 106854 / NCIMB 13768 / 1H11</strain>
    </source>
</reference>
<keyword id="KW-0963">Cytoplasm</keyword>
<keyword id="KW-1185">Reference proteome</keyword>
<keyword id="KW-0690">Ribosome biogenesis</keyword>
<accession>Q1QSY8</accession>
<organism>
    <name type="scientific">Chromohalobacter salexigens (strain ATCC BAA-138 / DSM 3043 / CIP 106854 / NCIMB 13768 / 1H11)</name>
    <dbReference type="NCBI Taxonomy" id="290398"/>
    <lineage>
        <taxon>Bacteria</taxon>
        <taxon>Pseudomonadati</taxon>
        <taxon>Pseudomonadota</taxon>
        <taxon>Gammaproteobacteria</taxon>
        <taxon>Oceanospirillales</taxon>
        <taxon>Halomonadaceae</taxon>
        <taxon>Chromohalobacter</taxon>
    </lineage>
</organism>
<gene>
    <name evidence="1" type="primary">rimP</name>
    <name type="ordered locus">Csal_3076</name>
</gene>
<protein>
    <recommendedName>
        <fullName evidence="1">Ribosome maturation factor RimP</fullName>
    </recommendedName>
</protein>
<feature type="chain" id="PRO_1000064701" description="Ribosome maturation factor RimP">
    <location>
        <begin position="1"/>
        <end position="153"/>
    </location>
</feature>
<dbReference type="EMBL" id="CP000285">
    <property type="protein sequence ID" value="ABE60420.1"/>
    <property type="molecule type" value="Genomic_DNA"/>
</dbReference>
<dbReference type="RefSeq" id="WP_011508366.1">
    <property type="nucleotide sequence ID" value="NC_007963.1"/>
</dbReference>
<dbReference type="SMR" id="Q1QSY8"/>
<dbReference type="STRING" id="290398.Csal_3076"/>
<dbReference type="GeneID" id="95335770"/>
<dbReference type="KEGG" id="csa:Csal_3076"/>
<dbReference type="eggNOG" id="COG0779">
    <property type="taxonomic scope" value="Bacteria"/>
</dbReference>
<dbReference type="HOGENOM" id="CLU_070525_1_1_6"/>
<dbReference type="OrthoDB" id="9805006at2"/>
<dbReference type="Proteomes" id="UP000000239">
    <property type="component" value="Chromosome"/>
</dbReference>
<dbReference type="GO" id="GO:0005829">
    <property type="term" value="C:cytosol"/>
    <property type="evidence" value="ECO:0007669"/>
    <property type="project" value="TreeGrafter"/>
</dbReference>
<dbReference type="GO" id="GO:0000028">
    <property type="term" value="P:ribosomal small subunit assembly"/>
    <property type="evidence" value="ECO:0007669"/>
    <property type="project" value="TreeGrafter"/>
</dbReference>
<dbReference type="GO" id="GO:0006412">
    <property type="term" value="P:translation"/>
    <property type="evidence" value="ECO:0007669"/>
    <property type="project" value="TreeGrafter"/>
</dbReference>
<dbReference type="CDD" id="cd01734">
    <property type="entry name" value="YlxS_C"/>
    <property type="match status" value="1"/>
</dbReference>
<dbReference type="FunFam" id="3.30.300.70:FF:000001">
    <property type="entry name" value="Ribosome maturation factor RimP"/>
    <property type="match status" value="1"/>
</dbReference>
<dbReference type="Gene3D" id="2.30.30.180">
    <property type="entry name" value="Ribosome maturation factor RimP, C-terminal domain"/>
    <property type="match status" value="1"/>
</dbReference>
<dbReference type="Gene3D" id="3.30.300.70">
    <property type="entry name" value="RimP-like superfamily, N-terminal"/>
    <property type="match status" value="1"/>
</dbReference>
<dbReference type="HAMAP" id="MF_01077">
    <property type="entry name" value="RimP"/>
    <property type="match status" value="1"/>
</dbReference>
<dbReference type="InterPro" id="IPR003728">
    <property type="entry name" value="Ribosome_maturation_RimP"/>
</dbReference>
<dbReference type="InterPro" id="IPR028998">
    <property type="entry name" value="RimP_C"/>
</dbReference>
<dbReference type="InterPro" id="IPR036847">
    <property type="entry name" value="RimP_C_sf"/>
</dbReference>
<dbReference type="InterPro" id="IPR028989">
    <property type="entry name" value="RimP_N"/>
</dbReference>
<dbReference type="InterPro" id="IPR035956">
    <property type="entry name" value="RimP_N_sf"/>
</dbReference>
<dbReference type="NCBIfam" id="NF000927">
    <property type="entry name" value="PRK00092.1-1"/>
    <property type="match status" value="1"/>
</dbReference>
<dbReference type="PANTHER" id="PTHR33867">
    <property type="entry name" value="RIBOSOME MATURATION FACTOR RIMP"/>
    <property type="match status" value="1"/>
</dbReference>
<dbReference type="PANTHER" id="PTHR33867:SF1">
    <property type="entry name" value="RIBOSOME MATURATION FACTOR RIMP"/>
    <property type="match status" value="1"/>
</dbReference>
<dbReference type="Pfam" id="PF17384">
    <property type="entry name" value="DUF150_C"/>
    <property type="match status" value="1"/>
</dbReference>
<dbReference type="Pfam" id="PF02576">
    <property type="entry name" value="RimP_N"/>
    <property type="match status" value="1"/>
</dbReference>
<dbReference type="SUPFAM" id="SSF74942">
    <property type="entry name" value="YhbC-like, C-terminal domain"/>
    <property type="match status" value="1"/>
</dbReference>
<dbReference type="SUPFAM" id="SSF75420">
    <property type="entry name" value="YhbC-like, N-terminal domain"/>
    <property type="match status" value="1"/>
</dbReference>
<sequence>MANKDAALKALIEPVVTAMGFELWGVDYLSQGKHSRLVIYIESADGVTVDDCAAVSRQVSGVLDVEDPISGEYRLEVSSPGMDRPLFTLEQFASFKGSHVKVKLSTPFEGRRKFQGQLAGVEGDEILLHLDGQEYCFPIESIEQARVVPQFDN</sequence>